<evidence type="ECO:0000255" key="1"/>
<evidence type="ECO:0000305" key="2"/>
<evidence type="ECO:0000312" key="3">
    <source>
        <dbReference type="EMBL" id="EAZ16564.1"/>
    </source>
</evidence>
<reference key="1">
    <citation type="journal article" date="2003" name="Science">
        <title>In-depth view of structure, activity, and evolution of rice chromosome 10.</title>
        <authorList>
            <person name="Yu Y."/>
            <person name="Rambo T."/>
            <person name="Currie J."/>
            <person name="Saski C."/>
            <person name="Kim H.-R."/>
            <person name="Collura K."/>
            <person name="Thompson S."/>
            <person name="Simmons J."/>
            <person name="Yang T.-J."/>
            <person name="Nah G."/>
            <person name="Patel A.J."/>
            <person name="Thurmond S."/>
            <person name="Henry D."/>
            <person name="Oates R."/>
            <person name="Palmer M."/>
            <person name="Pries G."/>
            <person name="Gibson J."/>
            <person name="Anderson H."/>
            <person name="Paradkar M."/>
            <person name="Crane L."/>
            <person name="Dale J."/>
            <person name="Carver M.B."/>
            <person name="Wood T."/>
            <person name="Frisch D."/>
            <person name="Engler F."/>
            <person name="Soderlund C."/>
            <person name="Palmer L.E."/>
            <person name="Teytelman L."/>
            <person name="Nascimento L."/>
            <person name="De la Bastide M."/>
            <person name="Spiegel L."/>
            <person name="Ware D."/>
            <person name="O'Shaughnessy A."/>
            <person name="Dike S."/>
            <person name="Dedhia N."/>
            <person name="Preston R."/>
            <person name="Huang E."/>
            <person name="Ferraro K."/>
            <person name="Kuit K."/>
            <person name="Miller B."/>
            <person name="Zutavern T."/>
            <person name="Katzenberger F."/>
            <person name="Muller S."/>
            <person name="Balija V."/>
            <person name="Martienssen R.A."/>
            <person name="Stein L."/>
            <person name="Minx P."/>
            <person name="Johnson D."/>
            <person name="Cordum H."/>
            <person name="Mardis E."/>
            <person name="Cheng Z."/>
            <person name="Jiang J."/>
            <person name="Wilson R."/>
            <person name="McCombie W.R."/>
            <person name="Wing R.A."/>
            <person name="Yuan Q."/>
            <person name="Ouyang S."/>
            <person name="Liu J."/>
            <person name="Jones K.M."/>
            <person name="Gansberger K."/>
            <person name="Moffat K."/>
            <person name="Hill J."/>
            <person name="Tsitrin T."/>
            <person name="Overton L."/>
            <person name="Bera J."/>
            <person name="Kim M."/>
            <person name="Jin S."/>
            <person name="Tallon L."/>
            <person name="Ciecko A."/>
            <person name="Pai G."/>
            <person name="Van Aken S."/>
            <person name="Utterback T."/>
            <person name="Reidmuller S."/>
            <person name="Bormann J."/>
            <person name="Feldblyum T."/>
            <person name="Hsiao J."/>
            <person name="Zismann V."/>
            <person name="Blunt S."/>
            <person name="de Vazeille A.R."/>
            <person name="Shaffer T."/>
            <person name="Koo H."/>
            <person name="Suh B."/>
            <person name="Yang Q."/>
            <person name="Haas B."/>
            <person name="Peterson J."/>
            <person name="Pertea M."/>
            <person name="Volfovsky N."/>
            <person name="Wortman J."/>
            <person name="White O."/>
            <person name="Salzberg S.L."/>
            <person name="Fraser C.M."/>
            <person name="Buell C.R."/>
            <person name="Messing J."/>
            <person name="Song R."/>
            <person name="Fuks G."/>
            <person name="Llaca V."/>
            <person name="Kovchak S."/>
            <person name="Young S."/>
            <person name="Bowers J.E."/>
            <person name="Paterson A.H."/>
            <person name="Johns M.A."/>
            <person name="Mao L."/>
            <person name="Pan H."/>
            <person name="Dean R.A."/>
        </authorList>
    </citation>
    <scope>NUCLEOTIDE SEQUENCE [LARGE SCALE GENOMIC DNA]</scope>
    <source>
        <strain>cv. Nipponbare</strain>
    </source>
</reference>
<reference key="2">
    <citation type="journal article" date="2005" name="Nature">
        <title>The map-based sequence of the rice genome.</title>
        <authorList>
            <consortium name="International rice genome sequencing project (IRGSP)"/>
        </authorList>
    </citation>
    <scope>NUCLEOTIDE SEQUENCE [LARGE SCALE GENOMIC DNA]</scope>
    <source>
        <strain>cv. Nipponbare</strain>
    </source>
</reference>
<reference key="3">
    <citation type="journal article" date="2008" name="Nucleic Acids Res.">
        <title>The rice annotation project database (RAP-DB): 2008 update.</title>
        <authorList>
            <consortium name="The rice annotation project (RAP)"/>
        </authorList>
    </citation>
    <scope>GENOME REANNOTATION</scope>
    <source>
        <strain>cv. Nipponbare</strain>
    </source>
</reference>
<reference key="4">
    <citation type="journal article" date="2013" name="Rice">
        <title>Improvement of the Oryza sativa Nipponbare reference genome using next generation sequence and optical map data.</title>
        <authorList>
            <person name="Kawahara Y."/>
            <person name="de la Bastide M."/>
            <person name="Hamilton J.P."/>
            <person name="Kanamori H."/>
            <person name="McCombie W.R."/>
            <person name="Ouyang S."/>
            <person name="Schwartz D.C."/>
            <person name="Tanaka T."/>
            <person name="Wu J."/>
            <person name="Zhou S."/>
            <person name="Childs K.L."/>
            <person name="Davidson R.M."/>
            <person name="Lin H."/>
            <person name="Quesada-Ocampo L."/>
            <person name="Vaillancourt B."/>
            <person name="Sakai H."/>
            <person name="Lee S.S."/>
            <person name="Kim J."/>
            <person name="Numa H."/>
            <person name="Itoh T."/>
            <person name="Buell C.R."/>
            <person name="Matsumoto T."/>
        </authorList>
    </citation>
    <scope>GENOME REANNOTATION</scope>
    <source>
        <strain>cv. Nipponbare</strain>
    </source>
</reference>
<reference key="5">
    <citation type="journal article" date="2005" name="PLoS Biol.">
        <title>The genomes of Oryza sativa: a history of duplications.</title>
        <authorList>
            <person name="Yu J."/>
            <person name="Wang J."/>
            <person name="Lin W."/>
            <person name="Li S."/>
            <person name="Li H."/>
            <person name="Zhou J."/>
            <person name="Ni P."/>
            <person name="Dong W."/>
            <person name="Hu S."/>
            <person name="Zeng C."/>
            <person name="Zhang J."/>
            <person name="Zhang Y."/>
            <person name="Li R."/>
            <person name="Xu Z."/>
            <person name="Li S."/>
            <person name="Li X."/>
            <person name="Zheng H."/>
            <person name="Cong L."/>
            <person name="Lin L."/>
            <person name="Yin J."/>
            <person name="Geng J."/>
            <person name="Li G."/>
            <person name="Shi J."/>
            <person name="Liu J."/>
            <person name="Lv H."/>
            <person name="Li J."/>
            <person name="Wang J."/>
            <person name="Deng Y."/>
            <person name="Ran L."/>
            <person name="Shi X."/>
            <person name="Wang X."/>
            <person name="Wu Q."/>
            <person name="Li C."/>
            <person name="Ren X."/>
            <person name="Wang J."/>
            <person name="Wang X."/>
            <person name="Li D."/>
            <person name="Liu D."/>
            <person name="Zhang X."/>
            <person name="Ji Z."/>
            <person name="Zhao W."/>
            <person name="Sun Y."/>
            <person name="Zhang Z."/>
            <person name="Bao J."/>
            <person name="Han Y."/>
            <person name="Dong L."/>
            <person name="Ji J."/>
            <person name="Chen P."/>
            <person name="Wu S."/>
            <person name="Liu J."/>
            <person name="Xiao Y."/>
            <person name="Bu D."/>
            <person name="Tan J."/>
            <person name="Yang L."/>
            <person name="Ye C."/>
            <person name="Zhang J."/>
            <person name="Xu J."/>
            <person name="Zhou Y."/>
            <person name="Yu Y."/>
            <person name="Zhang B."/>
            <person name="Zhuang S."/>
            <person name="Wei H."/>
            <person name="Liu B."/>
            <person name="Lei M."/>
            <person name="Yu H."/>
            <person name="Li Y."/>
            <person name="Xu H."/>
            <person name="Wei S."/>
            <person name="He X."/>
            <person name="Fang L."/>
            <person name="Zhang Z."/>
            <person name="Zhang Y."/>
            <person name="Huang X."/>
            <person name="Su Z."/>
            <person name="Tong W."/>
            <person name="Li J."/>
            <person name="Tong Z."/>
            <person name="Li S."/>
            <person name="Ye J."/>
            <person name="Wang L."/>
            <person name="Fang L."/>
            <person name="Lei T."/>
            <person name="Chen C.-S."/>
            <person name="Chen H.-C."/>
            <person name="Xu Z."/>
            <person name="Li H."/>
            <person name="Huang H."/>
            <person name="Zhang F."/>
            <person name="Xu H."/>
            <person name="Li N."/>
            <person name="Zhao C."/>
            <person name="Li S."/>
            <person name="Dong L."/>
            <person name="Huang Y."/>
            <person name="Li L."/>
            <person name="Xi Y."/>
            <person name="Qi Q."/>
            <person name="Li W."/>
            <person name="Zhang B."/>
            <person name="Hu W."/>
            <person name="Zhang Y."/>
            <person name="Tian X."/>
            <person name="Jiao Y."/>
            <person name="Liang X."/>
            <person name="Jin J."/>
            <person name="Gao L."/>
            <person name="Zheng W."/>
            <person name="Hao B."/>
            <person name="Liu S.-M."/>
            <person name="Wang W."/>
            <person name="Yuan L."/>
            <person name="Cao M."/>
            <person name="McDermott J."/>
            <person name="Samudrala R."/>
            <person name="Wang J."/>
            <person name="Wong G.K.-S."/>
            <person name="Yang H."/>
        </authorList>
    </citation>
    <scope>NUCLEOTIDE SEQUENCE [LARGE SCALE GENOMIC DNA]</scope>
    <source>
        <strain>cv. Nipponbare</strain>
    </source>
</reference>
<reference key="6">
    <citation type="journal article" date="2003" name="Science">
        <title>Collection, mapping, and annotation of over 28,000 cDNA clones from japonica rice.</title>
        <authorList>
            <consortium name="The rice full-length cDNA consortium"/>
        </authorList>
    </citation>
    <scope>NUCLEOTIDE SEQUENCE [LARGE SCALE MRNA]</scope>
    <source>
        <strain>cv. Nipponbare</strain>
    </source>
</reference>
<reference key="7">
    <citation type="journal article" date="2003" name="Plant Cell">
        <title>BRITTLE CULM1, which encodes a COBRA-like protein, affects the mechanical properties of rice plants.</title>
        <authorList>
            <person name="Li Y."/>
            <person name="Qian Q."/>
            <person name="Zhou Y."/>
            <person name="Yan M."/>
            <person name="Sun L."/>
            <person name="Zhang M."/>
            <person name="Fu Z."/>
            <person name="Wang Y."/>
            <person name="Han B."/>
            <person name="Pang X."/>
            <person name="Chen M."/>
            <person name="Li J."/>
        </authorList>
    </citation>
    <scope>IDENTIFICATION</scope>
    <scope>NOMENCLATURE</scope>
</reference>
<comment type="similarity">
    <text evidence="2">Belongs to the COBRA family.</text>
</comment>
<keyword id="KW-0325">Glycoprotein</keyword>
<keyword id="KW-1185">Reference proteome</keyword>
<keyword id="KW-0732">Signal</keyword>
<dbReference type="EMBL" id="AC068923">
    <property type="protein sequence ID" value="AAL58276.1"/>
    <property type="molecule type" value="Genomic_DNA"/>
</dbReference>
<dbReference type="EMBL" id="DP000086">
    <property type="protein sequence ID" value="AAP54447.1"/>
    <property type="molecule type" value="Genomic_DNA"/>
</dbReference>
<dbReference type="EMBL" id="AP008216">
    <property type="protein sequence ID" value="BAF26875.1"/>
    <property type="molecule type" value="Genomic_DNA"/>
</dbReference>
<dbReference type="EMBL" id="AP014966">
    <property type="protein sequence ID" value="BAT11495.1"/>
    <property type="molecule type" value="Genomic_DNA"/>
</dbReference>
<dbReference type="EMBL" id="CM000147">
    <property type="protein sequence ID" value="EAZ16564.1"/>
    <property type="molecule type" value="Genomic_DNA"/>
</dbReference>
<dbReference type="EMBL" id="AK071225">
    <property type="protein sequence ID" value="BAG92382.1"/>
    <property type="molecule type" value="mRNA"/>
</dbReference>
<dbReference type="RefSeq" id="XP_015613012.1">
    <property type="nucleotide sequence ID" value="XM_015757526.1"/>
</dbReference>
<dbReference type="FunCoup" id="Q8W3E8">
    <property type="interactions" value="4"/>
</dbReference>
<dbReference type="STRING" id="39947.Q8W3E8"/>
<dbReference type="GlyCosmos" id="Q8W3E8">
    <property type="glycosylation" value="5 sites, No reported glycans"/>
</dbReference>
<dbReference type="PaxDb" id="39947-Q8W3E8"/>
<dbReference type="EnsemblPlants" id="Os10t0497700-01">
    <property type="protein sequence ID" value="Os10t0497700-01"/>
    <property type="gene ID" value="Os10g0497700"/>
</dbReference>
<dbReference type="Gramene" id="Os10t0497700-01">
    <property type="protein sequence ID" value="Os10t0497700-01"/>
    <property type="gene ID" value="Os10g0497700"/>
</dbReference>
<dbReference type="KEGG" id="dosa:Os10g0497700"/>
<dbReference type="eggNOG" id="ENOG502QTGW">
    <property type="taxonomic scope" value="Eukaryota"/>
</dbReference>
<dbReference type="HOGENOM" id="CLU_038120_0_0_1"/>
<dbReference type="InParanoid" id="Q8W3E8"/>
<dbReference type="OMA" id="CREANKN"/>
<dbReference type="OrthoDB" id="623073at2759"/>
<dbReference type="Proteomes" id="UP000000763">
    <property type="component" value="Chromosome 10"/>
</dbReference>
<dbReference type="Proteomes" id="UP000007752">
    <property type="component" value="Chromosome 10"/>
</dbReference>
<dbReference type="Proteomes" id="UP000059680">
    <property type="component" value="Chromosome 10"/>
</dbReference>
<dbReference type="ExpressionAtlas" id="Q8W3E8">
    <property type="expression patterns" value="baseline and differential"/>
</dbReference>
<dbReference type="GO" id="GO:0005886">
    <property type="term" value="C:plasma membrane"/>
    <property type="evidence" value="ECO:0000318"/>
    <property type="project" value="GO_Central"/>
</dbReference>
<dbReference type="GO" id="GO:0010215">
    <property type="term" value="P:cellulose microfibril organization"/>
    <property type="evidence" value="ECO:0007669"/>
    <property type="project" value="InterPro"/>
</dbReference>
<dbReference type="GO" id="GO:0052324">
    <property type="term" value="P:plant-type cell wall cellulose biosynthetic process"/>
    <property type="evidence" value="ECO:0000318"/>
    <property type="project" value="GO_Central"/>
</dbReference>
<dbReference type="InterPro" id="IPR056900">
    <property type="entry name" value="COB_C"/>
</dbReference>
<dbReference type="InterPro" id="IPR006918">
    <property type="entry name" value="COBRA_pln"/>
</dbReference>
<dbReference type="PANTHER" id="PTHR31673:SF3">
    <property type="entry name" value="COBRA-LIKE PROTEIN 4"/>
    <property type="match status" value="1"/>
</dbReference>
<dbReference type="PANTHER" id="PTHR31673">
    <property type="entry name" value="PROTEIN COBRA"/>
    <property type="match status" value="1"/>
</dbReference>
<dbReference type="Pfam" id="PF25079">
    <property type="entry name" value="COB_C"/>
    <property type="match status" value="1"/>
</dbReference>
<dbReference type="Pfam" id="PF04833">
    <property type="entry name" value="COBRA"/>
    <property type="match status" value="1"/>
</dbReference>
<dbReference type="PIRSF" id="PIRSF038122">
    <property type="entry name" value="COBRA"/>
    <property type="match status" value="1"/>
</dbReference>
<protein>
    <recommendedName>
        <fullName>COBRA-like protein 4</fullName>
    </recommendedName>
    <alternativeName>
        <fullName>Protein BRITTLE CULM1-like 9</fullName>
    </alternativeName>
</protein>
<accession>Q8W3E8</accession>
<accession>A3C651</accession>
<accession>Q0IWP0</accession>
<accession>Q7XD23</accession>
<sequence>MAIGVGGCCAVLLAAALLFSSPATTYAYDSLDPNGNITIKWDVMQWTPDGYAAVVTLSNYQQFRHIQPPGWQLGWTWQQKEVIWSMYGAQAIEQGDCSMSKEGSNVPHSCKKHPTVVDLLPGAPIDLQIANCCKAGSLSAFSQDPANSAASFQIIVGHSGNSNETVRVPKNFSLMAPGPGYTCSRAMIVKPSRFLSPDGRRATQVLMTWNVICTYSQFLAQKVPSCCVSLSSFDNDKTVDCPTCSCGCRNEKSTTGKCVKKNAPDLQSIIHGPGRWTWQPLLQCTSHMCPVKINWHLMLKDKEHYRVKITVTNLNYRMNFTEWNLVVQYHPILDITQISGFNYKSIQVGKINDTTMLWGVKPYYDLLMQAGPLGNVQGELIVRKDFRASSTTNNNKGRAFPVRVYFNGDNCVMPPPDAYPVSITA</sequence>
<name>COBL4_ORYSJ</name>
<organism>
    <name type="scientific">Oryza sativa subsp. japonica</name>
    <name type="common">Rice</name>
    <dbReference type="NCBI Taxonomy" id="39947"/>
    <lineage>
        <taxon>Eukaryota</taxon>
        <taxon>Viridiplantae</taxon>
        <taxon>Streptophyta</taxon>
        <taxon>Embryophyta</taxon>
        <taxon>Tracheophyta</taxon>
        <taxon>Spermatophyta</taxon>
        <taxon>Magnoliopsida</taxon>
        <taxon>Liliopsida</taxon>
        <taxon>Poales</taxon>
        <taxon>Poaceae</taxon>
        <taxon>BOP clade</taxon>
        <taxon>Oryzoideae</taxon>
        <taxon>Oryzeae</taxon>
        <taxon>Oryzinae</taxon>
        <taxon>Oryza</taxon>
        <taxon>Oryza sativa</taxon>
    </lineage>
</organism>
<gene>
    <name type="primary">BC1L9</name>
    <name type="ordered locus">Os10g0497700</name>
    <name type="ordered locus">LOC_Os10g35460</name>
    <name evidence="3" type="ORF">OsJ_32037</name>
    <name type="ORF">OSJNBa0017E08.5</name>
</gene>
<proteinExistence type="evidence at transcript level"/>
<feature type="signal peptide" evidence="1">
    <location>
        <begin position="1"/>
        <end position="27"/>
    </location>
</feature>
<feature type="chain" id="PRO_0000247634" description="COBRA-like protein 4">
    <location>
        <begin position="28"/>
        <end position="425"/>
    </location>
</feature>
<feature type="glycosylation site" description="N-linked (GlcNAc...) asparagine" evidence="1">
    <location>
        <position position="36"/>
    </location>
</feature>
<feature type="glycosylation site" description="N-linked (GlcNAc...) asparagine" evidence="1">
    <location>
        <position position="163"/>
    </location>
</feature>
<feature type="glycosylation site" description="N-linked (GlcNAc...) asparagine" evidence="1">
    <location>
        <position position="171"/>
    </location>
</feature>
<feature type="glycosylation site" description="N-linked (GlcNAc...) asparagine" evidence="1">
    <location>
        <position position="319"/>
    </location>
</feature>
<feature type="glycosylation site" description="N-linked (GlcNAc...) asparagine" evidence="1">
    <location>
        <position position="352"/>
    </location>
</feature>